<name>COAD_CLOB8</name>
<evidence type="ECO:0000255" key="1">
    <source>
        <dbReference type="HAMAP-Rule" id="MF_00151"/>
    </source>
</evidence>
<gene>
    <name evidence="1" type="primary">coaD</name>
    <name type="ordered locus">Cbei_1160</name>
</gene>
<comment type="function">
    <text evidence="1">Reversibly transfers an adenylyl group from ATP to 4'-phosphopantetheine, yielding dephospho-CoA (dPCoA) and pyrophosphate.</text>
</comment>
<comment type="catalytic activity">
    <reaction evidence="1">
        <text>(R)-4'-phosphopantetheine + ATP + H(+) = 3'-dephospho-CoA + diphosphate</text>
        <dbReference type="Rhea" id="RHEA:19801"/>
        <dbReference type="ChEBI" id="CHEBI:15378"/>
        <dbReference type="ChEBI" id="CHEBI:30616"/>
        <dbReference type="ChEBI" id="CHEBI:33019"/>
        <dbReference type="ChEBI" id="CHEBI:57328"/>
        <dbReference type="ChEBI" id="CHEBI:61723"/>
        <dbReference type="EC" id="2.7.7.3"/>
    </reaction>
</comment>
<comment type="cofactor">
    <cofactor evidence="1">
        <name>Mg(2+)</name>
        <dbReference type="ChEBI" id="CHEBI:18420"/>
    </cofactor>
</comment>
<comment type="pathway">
    <text evidence="1">Cofactor biosynthesis; coenzyme A biosynthesis; CoA from (R)-pantothenate: step 4/5.</text>
</comment>
<comment type="subunit">
    <text evidence="1">Homohexamer.</text>
</comment>
<comment type="subcellular location">
    <subcellularLocation>
        <location evidence="1">Cytoplasm</location>
    </subcellularLocation>
</comment>
<comment type="similarity">
    <text evidence="1">Belongs to the bacterial CoaD family.</text>
</comment>
<reference key="1">
    <citation type="submission" date="2007-06" db="EMBL/GenBank/DDBJ databases">
        <title>Complete sequence of Clostridium beijerinckii NCIMB 8052.</title>
        <authorList>
            <consortium name="US DOE Joint Genome Institute"/>
            <person name="Copeland A."/>
            <person name="Lucas S."/>
            <person name="Lapidus A."/>
            <person name="Barry K."/>
            <person name="Detter J.C."/>
            <person name="Glavina del Rio T."/>
            <person name="Hammon N."/>
            <person name="Israni S."/>
            <person name="Dalin E."/>
            <person name="Tice H."/>
            <person name="Pitluck S."/>
            <person name="Sims D."/>
            <person name="Brettin T."/>
            <person name="Bruce D."/>
            <person name="Tapia R."/>
            <person name="Brainard J."/>
            <person name="Schmutz J."/>
            <person name="Larimer F."/>
            <person name="Land M."/>
            <person name="Hauser L."/>
            <person name="Kyrpides N."/>
            <person name="Mikhailova N."/>
            <person name="Bennet G."/>
            <person name="Cann I."/>
            <person name="Chen J.-S."/>
            <person name="Contreras A.L."/>
            <person name="Jones D."/>
            <person name="Kashket E."/>
            <person name="Mitchell W."/>
            <person name="Stoddard S."/>
            <person name="Schwarz W."/>
            <person name="Qureshi N."/>
            <person name="Young M."/>
            <person name="Shi Z."/>
            <person name="Ezeji T."/>
            <person name="White B."/>
            <person name="Blaschek H."/>
            <person name="Richardson P."/>
        </authorList>
    </citation>
    <scope>NUCLEOTIDE SEQUENCE [LARGE SCALE GENOMIC DNA]</scope>
    <source>
        <strain>ATCC 51743 / NCIMB 8052</strain>
    </source>
</reference>
<organism>
    <name type="scientific">Clostridium beijerinckii (strain ATCC 51743 / NCIMB 8052)</name>
    <name type="common">Clostridium acetobutylicum</name>
    <dbReference type="NCBI Taxonomy" id="290402"/>
    <lineage>
        <taxon>Bacteria</taxon>
        <taxon>Bacillati</taxon>
        <taxon>Bacillota</taxon>
        <taxon>Clostridia</taxon>
        <taxon>Eubacteriales</taxon>
        <taxon>Clostridiaceae</taxon>
        <taxon>Clostridium</taxon>
    </lineage>
</organism>
<feature type="chain" id="PRO_1000076757" description="Phosphopantetheine adenylyltransferase">
    <location>
        <begin position="1"/>
        <end position="159"/>
    </location>
</feature>
<feature type="binding site" evidence="1">
    <location>
        <begin position="9"/>
        <end position="10"/>
    </location>
    <ligand>
        <name>ATP</name>
        <dbReference type="ChEBI" id="CHEBI:30616"/>
    </ligand>
</feature>
<feature type="binding site" evidence="1">
    <location>
        <position position="9"/>
    </location>
    <ligand>
        <name>substrate</name>
    </ligand>
</feature>
<feature type="binding site" evidence="1">
    <location>
        <position position="17"/>
    </location>
    <ligand>
        <name>ATP</name>
        <dbReference type="ChEBI" id="CHEBI:30616"/>
    </ligand>
</feature>
<feature type="binding site" evidence="1">
    <location>
        <position position="41"/>
    </location>
    <ligand>
        <name>substrate</name>
    </ligand>
</feature>
<feature type="binding site" evidence="1">
    <location>
        <position position="73"/>
    </location>
    <ligand>
        <name>substrate</name>
    </ligand>
</feature>
<feature type="binding site" evidence="1">
    <location>
        <position position="87"/>
    </location>
    <ligand>
        <name>substrate</name>
    </ligand>
</feature>
<feature type="binding site" evidence="1">
    <location>
        <begin position="88"/>
        <end position="90"/>
    </location>
    <ligand>
        <name>ATP</name>
        <dbReference type="ChEBI" id="CHEBI:30616"/>
    </ligand>
</feature>
<feature type="binding site" evidence="1">
    <location>
        <position position="98"/>
    </location>
    <ligand>
        <name>ATP</name>
        <dbReference type="ChEBI" id="CHEBI:30616"/>
    </ligand>
</feature>
<feature type="binding site" evidence="1">
    <location>
        <begin position="123"/>
        <end position="129"/>
    </location>
    <ligand>
        <name>ATP</name>
        <dbReference type="ChEBI" id="CHEBI:30616"/>
    </ligand>
</feature>
<feature type="site" description="Transition state stabilizer" evidence="1">
    <location>
        <position position="17"/>
    </location>
</feature>
<protein>
    <recommendedName>
        <fullName evidence="1">Phosphopantetheine adenylyltransferase</fullName>
        <ecNumber evidence="1">2.7.7.3</ecNumber>
    </recommendedName>
    <alternativeName>
        <fullName evidence="1">Dephospho-CoA pyrophosphorylase</fullName>
    </alternativeName>
    <alternativeName>
        <fullName evidence="1">Pantetheine-phosphate adenylyltransferase</fullName>
        <shortName evidence="1">PPAT</shortName>
    </alternativeName>
</protein>
<proteinExistence type="inferred from homology"/>
<dbReference type="EC" id="2.7.7.3" evidence="1"/>
<dbReference type="EMBL" id="CP000721">
    <property type="protein sequence ID" value="ABR33342.1"/>
    <property type="molecule type" value="Genomic_DNA"/>
</dbReference>
<dbReference type="RefSeq" id="WP_011968499.1">
    <property type="nucleotide sequence ID" value="NC_009617.1"/>
</dbReference>
<dbReference type="SMR" id="A6LSL2"/>
<dbReference type="GeneID" id="66344148"/>
<dbReference type="KEGG" id="cbe:Cbei_1160"/>
<dbReference type="eggNOG" id="COG0669">
    <property type="taxonomic scope" value="Bacteria"/>
</dbReference>
<dbReference type="HOGENOM" id="CLU_100149_0_1_9"/>
<dbReference type="UniPathway" id="UPA00241">
    <property type="reaction ID" value="UER00355"/>
</dbReference>
<dbReference type="Proteomes" id="UP000000565">
    <property type="component" value="Chromosome"/>
</dbReference>
<dbReference type="GO" id="GO:0005737">
    <property type="term" value="C:cytoplasm"/>
    <property type="evidence" value="ECO:0007669"/>
    <property type="project" value="UniProtKB-SubCell"/>
</dbReference>
<dbReference type="GO" id="GO:0005524">
    <property type="term" value="F:ATP binding"/>
    <property type="evidence" value="ECO:0007669"/>
    <property type="project" value="UniProtKB-KW"/>
</dbReference>
<dbReference type="GO" id="GO:0004595">
    <property type="term" value="F:pantetheine-phosphate adenylyltransferase activity"/>
    <property type="evidence" value="ECO:0007669"/>
    <property type="project" value="UniProtKB-UniRule"/>
</dbReference>
<dbReference type="GO" id="GO:0015937">
    <property type="term" value="P:coenzyme A biosynthetic process"/>
    <property type="evidence" value="ECO:0007669"/>
    <property type="project" value="UniProtKB-UniRule"/>
</dbReference>
<dbReference type="CDD" id="cd02163">
    <property type="entry name" value="PPAT"/>
    <property type="match status" value="1"/>
</dbReference>
<dbReference type="Gene3D" id="3.40.50.620">
    <property type="entry name" value="HUPs"/>
    <property type="match status" value="1"/>
</dbReference>
<dbReference type="HAMAP" id="MF_00151">
    <property type="entry name" value="PPAT_bact"/>
    <property type="match status" value="1"/>
</dbReference>
<dbReference type="InterPro" id="IPR004821">
    <property type="entry name" value="Cyt_trans-like"/>
</dbReference>
<dbReference type="InterPro" id="IPR001980">
    <property type="entry name" value="PPAT"/>
</dbReference>
<dbReference type="InterPro" id="IPR014729">
    <property type="entry name" value="Rossmann-like_a/b/a_fold"/>
</dbReference>
<dbReference type="NCBIfam" id="TIGR01510">
    <property type="entry name" value="coaD_prev_kdtB"/>
    <property type="match status" value="1"/>
</dbReference>
<dbReference type="NCBIfam" id="TIGR00125">
    <property type="entry name" value="cyt_tran_rel"/>
    <property type="match status" value="1"/>
</dbReference>
<dbReference type="PANTHER" id="PTHR21342">
    <property type="entry name" value="PHOSPHOPANTETHEINE ADENYLYLTRANSFERASE"/>
    <property type="match status" value="1"/>
</dbReference>
<dbReference type="PANTHER" id="PTHR21342:SF1">
    <property type="entry name" value="PHOSPHOPANTETHEINE ADENYLYLTRANSFERASE"/>
    <property type="match status" value="1"/>
</dbReference>
<dbReference type="Pfam" id="PF01467">
    <property type="entry name" value="CTP_transf_like"/>
    <property type="match status" value="1"/>
</dbReference>
<dbReference type="PRINTS" id="PR01020">
    <property type="entry name" value="LPSBIOSNTHSS"/>
</dbReference>
<dbReference type="SUPFAM" id="SSF52374">
    <property type="entry name" value="Nucleotidylyl transferase"/>
    <property type="match status" value="1"/>
</dbReference>
<sequence>MRVAVYPGSFDPITNGHLDIIKRGAKVFDKVIVAVLVNVDKKYLFESSERVELIKRVTRDIENVEIRSFDGLLVNFLKECKTNIILKGLRTASDFEYEFQMAFINKELDDDTETVCMMSSAKNIHISSSTVKQVARFGGDISGLVPNEIISDIMSRINL</sequence>
<keyword id="KW-0067">ATP-binding</keyword>
<keyword id="KW-0173">Coenzyme A biosynthesis</keyword>
<keyword id="KW-0963">Cytoplasm</keyword>
<keyword id="KW-0460">Magnesium</keyword>
<keyword id="KW-0547">Nucleotide-binding</keyword>
<keyword id="KW-0548">Nucleotidyltransferase</keyword>
<keyword id="KW-0808">Transferase</keyword>
<accession>A6LSL2</accession>